<evidence type="ECO:0000255" key="1">
    <source>
        <dbReference type="HAMAP-Rule" id="MF_01220"/>
    </source>
</evidence>
<comment type="function">
    <text evidence="1">Catalyzes the reversible phosphorylation of UMP to UDP.</text>
</comment>
<comment type="catalytic activity">
    <reaction evidence="1">
        <text>UMP + ATP = UDP + ADP</text>
        <dbReference type="Rhea" id="RHEA:24400"/>
        <dbReference type="ChEBI" id="CHEBI:30616"/>
        <dbReference type="ChEBI" id="CHEBI:57865"/>
        <dbReference type="ChEBI" id="CHEBI:58223"/>
        <dbReference type="ChEBI" id="CHEBI:456216"/>
        <dbReference type="EC" id="2.7.4.22"/>
    </reaction>
</comment>
<comment type="activity regulation">
    <text evidence="1">Allosterically activated by GTP. Inhibited by UTP.</text>
</comment>
<comment type="pathway">
    <text evidence="1">Pyrimidine metabolism; CTP biosynthesis via de novo pathway; UDP from UMP (UMPK route): step 1/1.</text>
</comment>
<comment type="subunit">
    <text evidence="1">Homohexamer.</text>
</comment>
<comment type="subcellular location">
    <subcellularLocation>
        <location evidence="1">Cytoplasm</location>
    </subcellularLocation>
</comment>
<comment type="similarity">
    <text evidence="1">Belongs to the UMP kinase family.</text>
</comment>
<proteinExistence type="inferred from homology"/>
<protein>
    <recommendedName>
        <fullName evidence="1">Uridylate kinase</fullName>
        <shortName evidence="1">UK</shortName>
        <ecNumber evidence="1">2.7.4.22</ecNumber>
    </recommendedName>
    <alternativeName>
        <fullName evidence="1">Uridine monophosphate kinase</fullName>
        <shortName evidence="1">UMP kinase</shortName>
        <shortName evidence="1">UMPK</shortName>
    </alternativeName>
</protein>
<reference key="1">
    <citation type="submission" date="2007-06" db="EMBL/GenBank/DDBJ databases">
        <authorList>
            <person name="Brinkac L.M."/>
            <person name="Daugherty S."/>
            <person name="Dodson R.J."/>
            <person name="Madupu R."/>
            <person name="Brown J.L."/>
            <person name="Bruce D."/>
            <person name="Detter C."/>
            <person name="Munk C."/>
            <person name="Smith L.A."/>
            <person name="Smith T.J."/>
            <person name="White O."/>
            <person name="Brettin T.S."/>
        </authorList>
    </citation>
    <scope>NUCLEOTIDE SEQUENCE [LARGE SCALE GENOMIC DNA]</scope>
    <source>
        <strain>Langeland / NCTC 10281 / Type F</strain>
    </source>
</reference>
<feature type="chain" id="PRO_1000053911" description="Uridylate kinase">
    <location>
        <begin position="1"/>
        <end position="238"/>
    </location>
</feature>
<feature type="region of interest" description="Involved in allosteric activation by GTP" evidence="1">
    <location>
        <begin position="20"/>
        <end position="25"/>
    </location>
</feature>
<feature type="binding site" evidence="1">
    <location>
        <begin position="12"/>
        <end position="15"/>
    </location>
    <ligand>
        <name>ATP</name>
        <dbReference type="ChEBI" id="CHEBI:30616"/>
    </ligand>
</feature>
<feature type="binding site" evidence="1">
    <location>
        <position position="54"/>
    </location>
    <ligand>
        <name>UMP</name>
        <dbReference type="ChEBI" id="CHEBI:57865"/>
    </ligand>
</feature>
<feature type="binding site" evidence="1">
    <location>
        <position position="55"/>
    </location>
    <ligand>
        <name>ATP</name>
        <dbReference type="ChEBI" id="CHEBI:30616"/>
    </ligand>
</feature>
<feature type="binding site" evidence="1">
    <location>
        <position position="59"/>
    </location>
    <ligand>
        <name>ATP</name>
        <dbReference type="ChEBI" id="CHEBI:30616"/>
    </ligand>
</feature>
<feature type="binding site" evidence="1">
    <location>
        <position position="72"/>
    </location>
    <ligand>
        <name>UMP</name>
        <dbReference type="ChEBI" id="CHEBI:57865"/>
    </ligand>
</feature>
<feature type="binding site" evidence="1">
    <location>
        <begin position="133"/>
        <end position="140"/>
    </location>
    <ligand>
        <name>UMP</name>
        <dbReference type="ChEBI" id="CHEBI:57865"/>
    </ligand>
</feature>
<feature type="binding site" evidence="1">
    <location>
        <position position="166"/>
    </location>
    <ligand>
        <name>ATP</name>
        <dbReference type="ChEBI" id="CHEBI:30616"/>
    </ligand>
</feature>
<feature type="binding site" evidence="1">
    <location>
        <position position="169"/>
    </location>
    <ligand>
        <name>ATP</name>
        <dbReference type="ChEBI" id="CHEBI:30616"/>
    </ligand>
</feature>
<accession>A7GG21</accession>
<organism>
    <name type="scientific">Clostridium botulinum (strain Langeland / NCTC 10281 / Type F)</name>
    <dbReference type="NCBI Taxonomy" id="441772"/>
    <lineage>
        <taxon>Bacteria</taxon>
        <taxon>Bacillati</taxon>
        <taxon>Bacillota</taxon>
        <taxon>Clostridia</taxon>
        <taxon>Eubacteriales</taxon>
        <taxon>Clostridiaceae</taxon>
        <taxon>Clostridium</taxon>
    </lineage>
</organism>
<keyword id="KW-0021">Allosteric enzyme</keyword>
<keyword id="KW-0067">ATP-binding</keyword>
<keyword id="KW-0963">Cytoplasm</keyword>
<keyword id="KW-0418">Kinase</keyword>
<keyword id="KW-0547">Nucleotide-binding</keyword>
<keyword id="KW-0665">Pyrimidine biosynthesis</keyword>
<keyword id="KW-0808">Transferase</keyword>
<name>PYRH_CLOBL</name>
<sequence length="238" mass="26229">MNEPKYKRVMLKLSGEALSGEKGFGFDFDFTKEISEQIKKLVDMGIEVGAVVGGGNIWRGRSGSEMDRTTADYMGMLATCINALALQDSLEQLGVNTRVQTAIEMKEIAEPFIRRRAMRHLEKERVVIFASGTGNPYFSTDTAAALRAAEIEADVILLAKKVDGVYDKDPHKYDDAKKYNKLSYIEVLDQGLQVMDSTATSLCMDNDIPILVFGLDEPCNIIKAVTGEEIGTLVSNSK</sequence>
<dbReference type="EC" id="2.7.4.22" evidence="1"/>
<dbReference type="EMBL" id="CP000728">
    <property type="protein sequence ID" value="ABS42670.1"/>
    <property type="molecule type" value="Genomic_DNA"/>
</dbReference>
<dbReference type="RefSeq" id="WP_012100384.1">
    <property type="nucleotide sequence ID" value="NC_009699.1"/>
</dbReference>
<dbReference type="SMR" id="A7GG21"/>
<dbReference type="KEGG" id="cbf:CLI_2489"/>
<dbReference type="HOGENOM" id="CLU_033861_0_0_9"/>
<dbReference type="UniPathway" id="UPA00159">
    <property type="reaction ID" value="UER00275"/>
</dbReference>
<dbReference type="Proteomes" id="UP000002410">
    <property type="component" value="Chromosome"/>
</dbReference>
<dbReference type="GO" id="GO:0005737">
    <property type="term" value="C:cytoplasm"/>
    <property type="evidence" value="ECO:0007669"/>
    <property type="project" value="UniProtKB-SubCell"/>
</dbReference>
<dbReference type="GO" id="GO:0005524">
    <property type="term" value="F:ATP binding"/>
    <property type="evidence" value="ECO:0007669"/>
    <property type="project" value="UniProtKB-KW"/>
</dbReference>
<dbReference type="GO" id="GO:0033862">
    <property type="term" value="F:UMP kinase activity"/>
    <property type="evidence" value="ECO:0007669"/>
    <property type="project" value="UniProtKB-EC"/>
</dbReference>
<dbReference type="GO" id="GO:0044210">
    <property type="term" value="P:'de novo' CTP biosynthetic process"/>
    <property type="evidence" value="ECO:0007669"/>
    <property type="project" value="UniProtKB-UniRule"/>
</dbReference>
<dbReference type="GO" id="GO:0006225">
    <property type="term" value="P:UDP biosynthetic process"/>
    <property type="evidence" value="ECO:0007669"/>
    <property type="project" value="TreeGrafter"/>
</dbReference>
<dbReference type="CDD" id="cd04254">
    <property type="entry name" value="AAK_UMPK-PyrH-Ec"/>
    <property type="match status" value="1"/>
</dbReference>
<dbReference type="FunFam" id="3.40.1160.10:FF:000001">
    <property type="entry name" value="Uridylate kinase"/>
    <property type="match status" value="1"/>
</dbReference>
<dbReference type="Gene3D" id="3.40.1160.10">
    <property type="entry name" value="Acetylglutamate kinase-like"/>
    <property type="match status" value="1"/>
</dbReference>
<dbReference type="HAMAP" id="MF_01220_B">
    <property type="entry name" value="PyrH_B"/>
    <property type="match status" value="1"/>
</dbReference>
<dbReference type="InterPro" id="IPR036393">
    <property type="entry name" value="AceGlu_kinase-like_sf"/>
</dbReference>
<dbReference type="InterPro" id="IPR001048">
    <property type="entry name" value="Asp/Glu/Uridylate_kinase"/>
</dbReference>
<dbReference type="InterPro" id="IPR011817">
    <property type="entry name" value="Uridylate_kinase"/>
</dbReference>
<dbReference type="InterPro" id="IPR015963">
    <property type="entry name" value="Uridylate_kinase_bac"/>
</dbReference>
<dbReference type="NCBIfam" id="TIGR02075">
    <property type="entry name" value="pyrH_bact"/>
    <property type="match status" value="1"/>
</dbReference>
<dbReference type="PANTHER" id="PTHR42833">
    <property type="entry name" value="URIDYLATE KINASE"/>
    <property type="match status" value="1"/>
</dbReference>
<dbReference type="PANTHER" id="PTHR42833:SF4">
    <property type="entry name" value="URIDYLATE KINASE PUMPKIN, CHLOROPLASTIC"/>
    <property type="match status" value="1"/>
</dbReference>
<dbReference type="Pfam" id="PF00696">
    <property type="entry name" value="AA_kinase"/>
    <property type="match status" value="1"/>
</dbReference>
<dbReference type="PIRSF" id="PIRSF005650">
    <property type="entry name" value="Uridylate_kin"/>
    <property type="match status" value="1"/>
</dbReference>
<dbReference type="SUPFAM" id="SSF53633">
    <property type="entry name" value="Carbamate kinase-like"/>
    <property type="match status" value="1"/>
</dbReference>
<gene>
    <name evidence="1" type="primary">pyrH</name>
    <name type="ordered locus">CLI_2489</name>
</gene>